<keyword id="KW-1185">Reference proteome</keyword>
<keyword id="KW-0687">Ribonucleoprotein</keyword>
<keyword id="KW-0689">Ribosomal protein</keyword>
<keyword id="KW-0694">RNA-binding</keyword>
<keyword id="KW-0699">rRNA-binding</keyword>
<accession>Q128U1</accession>
<proteinExistence type="inferred from homology"/>
<name>RS6_POLSJ</name>
<evidence type="ECO:0000255" key="1">
    <source>
        <dbReference type="HAMAP-Rule" id="MF_00360"/>
    </source>
</evidence>
<evidence type="ECO:0000256" key="2">
    <source>
        <dbReference type="SAM" id="MobiDB-lite"/>
    </source>
</evidence>
<evidence type="ECO:0000305" key="3"/>
<feature type="chain" id="PRO_1000005312" description="Small ribosomal subunit protein bS6">
    <location>
        <begin position="1"/>
        <end position="121"/>
    </location>
</feature>
<feature type="region of interest" description="Disordered" evidence="2">
    <location>
        <begin position="102"/>
        <end position="121"/>
    </location>
</feature>
<feature type="compositionally biased region" description="Basic and acidic residues" evidence="2">
    <location>
        <begin position="105"/>
        <end position="115"/>
    </location>
</feature>
<sequence length="121" mass="14015">MRHYEIVLLIHPDQSEQVPAMLERYKGMITAGGGKVHRVEDWGRRQLVYLIQKLAKAHYLCINIEASQAVMEEIEHAFKFNDAVLRHLTVVKKKAETGPSLMMRNVEREEARKAQQQEYAA</sequence>
<organism>
    <name type="scientific">Polaromonas sp. (strain JS666 / ATCC BAA-500)</name>
    <dbReference type="NCBI Taxonomy" id="296591"/>
    <lineage>
        <taxon>Bacteria</taxon>
        <taxon>Pseudomonadati</taxon>
        <taxon>Pseudomonadota</taxon>
        <taxon>Betaproteobacteria</taxon>
        <taxon>Burkholderiales</taxon>
        <taxon>Comamonadaceae</taxon>
        <taxon>Polaromonas</taxon>
    </lineage>
</organism>
<gene>
    <name evidence="1" type="primary">rpsF</name>
    <name type="ordered locus">Bpro_3037</name>
</gene>
<comment type="function">
    <text evidence="1">Binds together with bS18 to 16S ribosomal RNA.</text>
</comment>
<comment type="similarity">
    <text evidence="1">Belongs to the bacterial ribosomal protein bS6 family.</text>
</comment>
<dbReference type="EMBL" id="CP000316">
    <property type="protein sequence ID" value="ABE44951.1"/>
    <property type="molecule type" value="Genomic_DNA"/>
</dbReference>
<dbReference type="RefSeq" id="WP_007871089.1">
    <property type="nucleotide sequence ID" value="NZ_FNHX01000001.1"/>
</dbReference>
<dbReference type="SMR" id="Q128U1"/>
<dbReference type="STRING" id="296591.Bpro_3037"/>
<dbReference type="KEGG" id="pol:Bpro_3037"/>
<dbReference type="eggNOG" id="COG0360">
    <property type="taxonomic scope" value="Bacteria"/>
</dbReference>
<dbReference type="HOGENOM" id="CLU_113441_6_1_4"/>
<dbReference type="OrthoDB" id="9812702at2"/>
<dbReference type="Proteomes" id="UP000001983">
    <property type="component" value="Chromosome"/>
</dbReference>
<dbReference type="GO" id="GO:0022627">
    <property type="term" value="C:cytosolic small ribosomal subunit"/>
    <property type="evidence" value="ECO:0007669"/>
    <property type="project" value="TreeGrafter"/>
</dbReference>
<dbReference type="GO" id="GO:0070181">
    <property type="term" value="F:small ribosomal subunit rRNA binding"/>
    <property type="evidence" value="ECO:0007669"/>
    <property type="project" value="TreeGrafter"/>
</dbReference>
<dbReference type="GO" id="GO:0003735">
    <property type="term" value="F:structural constituent of ribosome"/>
    <property type="evidence" value="ECO:0007669"/>
    <property type="project" value="InterPro"/>
</dbReference>
<dbReference type="GO" id="GO:0006412">
    <property type="term" value="P:translation"/>
    <property type="evidence" value="ECO:0007669"/>
    <property type="project" value="UniProtKB-UniRule"/>
</dbReference>
<dbReference type="CDD" id="cd00473">
    <property type="entry name" value="bS6"/>
    <property type="match status" value="1"/>
</dbReference>
<dbReference type="Gene3D" id="3.30.70.60">
    <property type="match status" value="1"/>
</dbReference>
<dbReference type="HAMAP" id="MF_00360">
    <property type="entry name" value="Ribosomal_bS6"/>
    <property type="match status" value="1"/>
</dbReference>
<dbReference type="InterPro" id="IPR000529">
    <property type="entry name" value="Ribosomal_bS6"/>
</dbReference>
<dbReference type="InterPro" id="IPR035980">
    <property type="entry name" value="Ribosomal_bS6_sf"/>
</dbReference>
<dbReference type="InterPro" id="IPR020814">
    <property type="entry name" value="Ribosomal_S6_plastid/chlpt"/>
</dbReference>
<dbReference type="InterPro" id="IPR014717">
    <property type="entry name" value="Transl_elong_EF1B/ribsomal_bS6"/>
</dbReference>
<dbReference type="NCBIfam" id="TIGR00166">
    <property type="entry name" value="S6"/>
    <property type="match status" value="1"/>
</dbReference>
<dbReference type="PANTHER" id="PTHR21011">
    <property type="entry name" value="MITOCHONDRIAL 28S RIBOSOMAL PROTEIN S6"/>
    <property type="match status" value="1"/>
</dbReference>
<dbReference type="PANTHER" id="PTHR21011:SF1">
    <property type="entry name" value="SMALL RIBOSOMAL SUBUNIT PROTEIN BS6M"/>
    <property type="match status" value="1"/>
</dbReference>
<dbReference type="Pfam" id="PF01250">
    <property type="entry name" value="Ribosomal_S6"/>
    <property type="match status" value="1"/>
</dbReference>
<dbReference type="SUPFAM" id="SSF54995">
    <property type="entry name" value="Ribosomal protein S6"/>
    <property type="match status" value="1"/>
</dbReference>
<reference key="1">
    <citation type="journal article" date="2008" name="Appl. Environ. Microbiol.">
        <title>The genome of Polaromonas sp. strain JS666: insights into the evolution of a hydrocarbon- and xenobiotic-degrading bacterium, and features of relevance to biotechnology.</title>
        <authorList>
            <person name="Mattes T.E."/>
            <person name="Alexander A.K."/>
            <person name="Richardson P.M."/>
            <person name="Munk A.C."/>
            <person name="Han C.S."/>
            <person name="Stothard P."/>
            <person name="Coleman N.V."/>
        </authorList>
    </citation>
    <scope>NUCLEOTIDE SEQUENCE [LARGE SCALE GENOMIC DNA]</scope>
    <source>
        <strain>JS666 / ATCC BAA-500</strain>
    </source>
</reference>
<protein>
    <recommendedName>
        <fullName evidence="1">Small ribosomal subunit protein bS6</fullName>
    </recommendedName>
    <alternativeName>
        <fullName evidence="3">30S ribosomal protein S6</fullName>
    </alternativeName>
</protein>